<reference key="1">
    <citation type="journal article" date="1985" name="J. Biol. Chem.">
        <title>Structure and expression of two human metallothionein-I isoform genes and a related pseudogene.</title>
        <authorList>
            <person name="Schmidt C.J."/>
            <person name="Jubier M.-F."/>
            <person name="Hamer D.H."/>
        </authorList>
    </citation>
    <scope>NUCLEOTIDE SEQUENCE [GENOMIC DNA]</scope>
    <scope>ALTERNATIVE SPLICING (ISOFORM 1)</scope>
</reference>
<reference key="2">
    <citation type="journal article" date="1991" name="Methods Enzymol.">
        <title>Amino acid sequence determination.</title>
        <authorList>
            <person name="Hunziker P.E."/>
        </authorList>
    </citation>
    <scope>PROTEIN SEQUENCE (ISOFORM 1)</scope>
    <scope>ACETYLATION AT MET-1</scope>
    <source>
        <tissue>Liver</tissue>
    </source>
</reference>
<reference key="3">
    <citation type="submission" date="2002-03" db="EMBL/GenBank/DDBJ databases">
        <authorList>
            <person name="Guo J.H."/>
            <person name="Huang X.H."/>
            <person name="Yu L."/>
        </authorList>
    </citation>
    <scope>NUCLEOTIDE SEQUENCE [MRNA] (ISOFORM 2)</scope>
    <source>
        <tissue>Liver</tissue>
    </source>
</reference>
<reference key="4">
    <citation type="submission" date="2004-10" db="EMBL/GenBank/DDBJ databases">
        <authorList>
            <person name="Yu L."/>
        </authorList>
    </citation>
    <scope>NUCLEOTIDE SEQUENCE [MRNA] (ISOFORM 1)</scope>
</reference>
<reference key="5">
    <citation type="journal article" date="2004" name="Nature">
        <title>The sequence and analysis of duplication-rich human chromosome 16.</title>
        <authorList>
            <person name="Martin J."/>
            <person name="Han C."/>
            <person name="Gordon L.A."/>
            <person name="Terry A."/>
            <person name="Prabhakar S."/>
            <person name="She X."/>
            <person name="Xie G."/>
            <person name="Hellsten U."/>
            <person name="Chan Y.M."/>
            <person name="Altherr M."/>
            <person name="Couronne O."/>
            <person name="Aerts A."/>
            <person name="Bajorek E."/>
            <person name="Black S."/>
            <person name="Blumer H."/>
            <person name="Branscomb E."/>
            <person name="Brown N.C."/>
            <person name="Bruno W.J."/>
            <person name="Buckingham J.M."/>
            <person name="Callen D.F."/>
            <person name="Campbell C.S."/>
            <person name="Campbell M.L."/>
            <person name="Campbell E.W."/>
            <person name="Caoile C."/>
            <person name="Challacombe J.F."/>
            <person name="Chasteen L.A."/>
            <person name="Chertkov O."/>
            <person name="Chi H.C."/>
            <person name="Christensen M."/>
            <person name="Clark L.M."/>
            <person name="Cohn J.D."/>
            <person name="Denys M."/>
            <person name="Detter J.C."/>
            <person name="Dickson M."/>
            <person name="Dimitrijevic-Bussod M."/>
            <person name="Escobar J."/>
            <person name="Fawcett J.J."/>
            <person name="Flowers D."/>
            <person name="Fotopulos D."/>
            <person name="Glavina T."/>
            <person name="Gomez M."/>
            <person name="Gonzales E."/>
            <person name="Goodstein D."/>
            <person name="Goodwin L.A."/>
            <person name="Grady D.L."/>
            <person name="Grigoriev I."/>
            <person name="Groza M."/>
            <person name="Hammon N."/>
            <person name="Hawkins T."/>
            <person name="Haydu L."/>
            <person name="Hildebrand C.E."/>
            <person name="Huang W."/>
            <person name="Israni S."/>
            <person name="Jett J."/>
            <person name="Jewett P.B."/>
            <person name="Kadner K."/>
            <person name="Kimball H."/>
            <person name="Kobayashi A."/>
            <person name="Krawczyk M.-C."/>
            <person name="Leyba T."/>
            <person name="Longmire J.L."/>
            <person name="Lopez F."/>
            <person name="Lou Y."/>
            <person name="Lowry S."/>
            <person name="Ludeman T."/>
            <person name="Manohar C.F."/>
            <person name="Mark G.A."/>
            <person name="McMurray K.L."/>
            <person name="Meincke L.J."/>
            <person name="Morgan J."/>
            <person name="Moyzis R.K."/>
            <person name="Mundt M.O."/>
            <person name="Munk A.C."/>
            <person name="Nandkeshwar R.D."/>
            <person name="Pitluck S."/>
            <person name="Pollard M."/>
            <person name="Predki P."/>
            <person name="Parson-Quintana B."/>
            <person name="Ramirez L."/>
            <person name="Rash S."/>
            <person name="Retterer J."/>
            <person name="Ricke D.O."/>
            <person name="Robinson D.L."/>
            <person name="Rodriguez A."/>
            <person name="Salamov A."/>
            <person name="Saunders E.H."/>
            <person name="Scott D."/>
            <person name="Shough T."/>
            <person name="Stallings R.L."/>
            <person name="Stalvey M."/>
            <person name="Sutherland R.D."/>
            <person name="Tapia R."/>
            <person name="Tesmer J.G."/>
            <person name="Thayer N."/>
            <person name="Thompson L.S."/>
            <person name="Tice H."/>
            <person name="Torney D.C."/>
            <person name="Tran-Gyamfi M."/>
            <person name="Tsai M."/>
            <person name="Ulanovsky L.E."/>
            <person name="Ustaszewska A."/>
            <person name="Vo N."/>
            <person name="White P.S."/>
            <person name="Williams A.L."/>
            <person name="Wills P.L."/>
            <person name="Wu J.-R."/>
            <person name="Wu K."/>
            <person name="Yang J."/>
            <person name="DeJong P."/>
            <person name="Bruce D."/>
            <person name="Doggett N.A."/>
            <person name="Deaven L."/>
            <person name="Schmutz J."/>
            <person name="Grimwood J."/>
            <person name="Richardson P."/>
            <person name="Rokhsar D.S."/>
            <person name="Eichler E.E."/>
            <person name="Gilna P."/>
            <person name="Lucas S.M."/>
            <person name="Myers R.M."/>
            <person name="Rubin E.M."/>
            <person name="Pennacchio L.A."/>
        </authorList>
    </citation>
    <scope>NUCLEOTIDE SEQUENCE [LARGE SCALE GENOMIC DNA]</scope>
</reference>
<reference key="6">
    <citation type="submission" date="2005-07" db="EMBL/GenBank/DDBJ databases">
        <authorList>
            <person name="Mural R.J."/>
            <person name="Istrail S."/>
            <person name="Sutton G.G."/>
            <person name="Florea L."/>
            <person name="Halpern A.L."/>
            <person name="Mobarry C.M."/>
            <person name="Lippert R."/>
            <person name="Walenz B."/>
            <person name="Shatkay H."/>
            <person name="Dew I."/>
            <person name="Miller J.R."/>
            <person name="Flanigan M.J."/>
            <person name="Edwards N.J."/>
            <person name="Bolanos R."/>
            <person name="Fasulo D."/>
            <person name="Halldorsson B.V."/>
            <person name="Hannenhalli S."/>
            <person name="Turner R."/>
            <person name="Yooseph S."/>
            <person name="Lu F."/>
            <person name="Nusskern D.R."/>
            <person name="Shue B.C."/>
            <person name="Zheng X.H."/>
            <person name="Zhong F."/>
            <person name="Delcher A.L."/>
            <person name="Huson D.H."/>
            <person name="Kravitz S.A."/>
            <person name="Mouchard L."/>
            <person name="Reinert K."/>
            <person name="Remington K.A."/>
            <person name="Clark A.G."/>
            <person name="Waterman M.S."/>
            <person name="Eichler E.E."/>
            <person name="Adams M.D."/>
            <person name="Hunkapiller M.W."/>
            <person name="Myers E.W."/>
            <person name="Venter J.C."/>
        </authorList>
    </citation>
    <scope>NUCLEOTIDE SEQUENCE [LARGE SCALE GENOMIC DNA]</scope>
</reference>
<reference key="7">
    <citation type="journal article" date="2004" name="Genome Res.">
        <title>The status, quality, and expansion of the NIH full-length cDNA project: the Mammalian Gene Collection (MGC).</title>
        <authorList>
            <consortium name="The MGC Project Team"/>
        </authorList>
    </citation>
    <scope>NUCLEOTIDE SEQUENCE [LARGE SCALE MRNA] (ISOFORM 1)</scope>
    <source>
        <tissue>Lung</tissue>
    </source>
</reference>
<reference key="8">
    <citation type="journal article" date="1994" name="Eur. J. Biochem.">
        <title>Induction by zinc of specific metallothionein isoforms in human monocytes.</title>
        <authorList>
            <person name="Pauwels M."/>
            <person name="van Weyenbergh J."/>
            <person name="Soumillion A."/>
            <person name="Proost P."/>
            <person name="Ley M."/>
        </authorList>
    </citation>
    <scope>NUCLEOTIDE SEQUENCE [MRNA] OF 1-31 (ISOFORM 1/2)</scope>
</reference>
<sequence>MDPNCSCATGGSCTCAGSCKCKECKCTSCKKSCCSCCPVGCAKCAQGCVCKGASEKCSCCA</sequence>
<feature type="chain" id="PRO_0000197236" description="Metallothionein-1E">
    <location>
        <begin position="1"/>
        <end position="61"/>
    </location>
</feature>
<feature type="region of interest" description="Beta">
    <location>
        <begin position="1"/>
        <end position="29"/>
    </location>
</feature>
<feature type="region of interest" description="Alpha">
    <location>
        <begin position="30"/>
        <end position="61"/>
    </location>
</feature>
<feature type="binding site" evidence="1">
    <location>
        <position position="5"/>
    </location>
    <ligand>
        <name>a divalent metal cation</name>
        <dbReference type="ChEBI" id="CHEBI:60240"/>
        <label>1</label>
        <note>in cluster B</note>
    </ligand>
</feature>
<feature type="binding site" evidence="1">
    <location>
        <position position="7"/>
    </location>
    <ligand>
        <name>a divalent metal cation</name>
        <dbReference type="ChEBI" id="CHEBI:60240"/>
        <label>1</label>
        <note>in cluster B</note>
    </ligand>
</feature>
<feature type="binding site" evidence="1">
    <location>
        <position position="7"/>
    </location>
    <ligand>
        <name>a divalent metal cation</name>
        <dbReference type="ChEBI" id="CHEBI:60240"/>
        <label>2</label>
        <note>in cluster B</note>
    </ligand>
</feature>
<feature type="binding site" evidence="1">
    <location>
        <position position="13"/>
    </location>
    <ligand>
        <name>a divalent metal cation</name>
        <dbReference type="ChEBI" id="CHEBI:60240"/>
        <label>2</label>
        <note>in cluster B</note>
    </ligand>
</feature>
<feature type="binding site" evidence="1">
    <location>
        <position position="15"/>
    </location>
    <ligand>
        <name>a divalent metal cation</name>
        <dbReference type="ChEBI" id="CHEBI:60240"/>
        <label>2</label>
        <note>in cluster B</note>
    </ligand>
</feature>
<feature type="binding site" evidence="1">
    <location>
        <position position="15"/>
    </location>
    <ligand>
        <name>a divalent metal cation</name>
        <dbReference type="ChEBI" id="CHEBI:60240"/>
        <label>3</label>
        <note>in cluster B</note>
    </ligand>
</feature>
<feature type="binding site" evidence="1">
    <location>
        <position position="19"/>
    </location>
    <ligand>
        <name>a divalent metal cation</name>
        <dbReference type="ChEBI" id="CHEBI:60240"/>
        <label>3</label>
        <note>in cluster B</note>
    </ligand>
</feature>
<feature type="binding site" evidence="1">
    <location>
        <position position="21"/>
    </location>
    <ligand>
        <name>a divalent metal cation</name>
        <dbReference type="ChEBI" id="CHEBI:60240"/>
        <label>1</label>
        <note>in cluster B</note>
    </ligand>
</feature>
<feature type="binding site" evidence="1">
    <location>
        <position position="24"/>
    </location>
    <ligand>
        <name>a divalent metal cation</name>
        <dbReference type="ChEBI" id="CHEBI:60240"/>
        <label>1</label>
        <note>in cluster B</note>
    </ligand>
</feature>
<feature type="binding site" evidence="1">
    <location>
        <position position="24"/>
    </location>
    <ligand>
        <name>a divalent metal cation</name>
        <dbReference type="ChEBI" id="CHEBI:60240"/>
        <label>3</label>
        <note>in cluster B</note>
    </ligand>
</feature>
<feature type="binding site" evidence="1">
    <location>
        <position position="26"/>
    </location>
    <ligand>
        <name>a divalent metal cation</name>
        <dbReference type="ChEBI" id="CHEBI:60240"/>
        <label>2</label>
        <note>in cluster B</note>
    </ligand>
</feature>
<feature type="binding site" evidence="1">
    <location>
        <position position="29"/>
    </location>
    <ligand>
        <name>a divalent metal cation</name>
        <dbReference type="ChEBI" id="CHEBI:60240"/>
        <label>3</label>
        <note>in cluster B</note>
    </ligand>
</feature>
<feature type="binding site" evidence="1">
    <location>
        <position position="33"/>
    </location>
    <ligand>
        <name>a divalent metal cation</name>
        <dbReference type="ChEBI" id="CHEBI:60240"/>
        <label>4</label>
        <note>in cluster A</note>
    </ligand>
</feature>
<feature type="binding site" evidence="1">
    <location>
        <position position="34"/>
    </location>
    <ligand>
        <name>a divalent metal cation</name>
        <dbReference type="ChEBI" id="CHEBI:60240"/>
        <label>4</label>
        <note>in cluster A</note>
    </ligand>
</feature>
<feature type="binding site" evidence="1">
    <location>
        <position position="34"/>
    </location>
    <ligand>
        <name>a divalent metal cation</name>
        <dbReference type="ChEBI" id="CHEBI:60240"/>
        <label>5</label>
        <note>in cluster A</note>
    </ligand>
</feature>
<feature type="binding site" evidence="1">
    <location>
        <position position="36"/>
    </location>
    <ligand>
        <name>a divalent metal cation</name>
        <dbReference type="ChEBI" id="CHEBI:60240"/>
        <label>5</label>
        <note>in cluster A</note>
    </ligand>
</feature>
<feature type="binding site" evidence="1">
    <location>
        <position position="37"/>
    </location>
    <ligand>
        <name>a divalent metal cation</name>
        <dbReference type="ChEBI" id="CHEBI:60240"/>
        <label>5</label>
        <note>in cluster A</note>
    </ligand>
</feature>
<feature type="binding site" evidence="1">
    <location>
        <position position="37"/>
    </location>
    <ligand>
        <name>a divalent metal cation</name>
        <dbReference type="ChEBI" id="CHEBI:60240"/>
        <label>6</label>
        <note>in cluster A</note>
    </ligand>
</feature>
<feature type="binding site" evidence="1">
    <location>
        <position position="41"/>
    </location>
    <ligand>
        <name>a divalent metal cation</name>
        <dbReference type="ChEBI" id="CHEBI:60240"/>
        <label>6</label>
        <note>in cluster A</note>
    </ligand>
</feature>
<feature type="binding site" evidence="1">
    <location>
        <position position="44"/>
    </location>
    <ligand>
        <name>a divalent metal cation</name>
        <dbReference type="ChEBI" id="CHEBI:60240"/>
        <label>4</label>
        <note>in cluster A</note>
    </ligand>
</feature>
<feature type="binding site" evidence="1">
    <location>
        <position position="44"/>
    </location>
    <ligand>
        <name>a divalent metal cation</name>
        <dbReference type="ChEBI" id="CHEBI:60240"/>
        <label>6</label>
        <note>in cluster A</note>
    </ligand>
</feature>
<feature type="binding site" evidence="1">
    <location>
        <position position="48"/>
    </location>
    <ligand>
        <name>a divalent metal cation</name>
        <dbReference type="ChEBI" id="CHEBI:60240"/>
        <label>4</label>
        <note>in cluster A</note>
    </ligand>
</feature>
<feature type="binding site" evidence="1">
    <location>
        <position position="50"/>
    </location>
    <ligand>
        <name>a divalent metal cation</name>
        <dbReference type="ChEBI" id="CHEBI:60240"/>
        <label>5</label>
        <note>in cluster A</note>
    </ligand>
</feature>
<feature type="binding site" evidence="1">
    <location>
        <position position="50"/>
    </location>
    <ligand>
        <name>a divalent metal cation</name>
        <dbReference type="ChEBI" id="CHEBI:60240"/>
        <label>7</label>
        <note>in cluster A</note>
    </ligand>
</feature>
<feature type="binding site" evidence="1">
    <location>
        <position position="57"/>
    </location>
    <ligand>
        <name>a divalent metal cation</name>
        <dbReference type="ChEBI" id="CHEBI:60240"/>
        <label>7</label>
        <note>in cluster A</note>
    </ligand>
</feature>
<feature type="binding site" evidence="1">
    <location>
        <position position="59"/>
    </location>
    <ligand>
        <name>a divalent metal cation</name>
        <dbReference type="ChEBI" id="CHEBI:60240"/>
        <label>7</label>
        <note>in cluster A</note>
    </ligand>
</feature>
<feature type="binding site" evidence="1">
    <location>
        <position position="60"/>
    </location>
    <ligand>
        <name>a divalent metal cation</name>
        <dbReference type="ChEBI" id="CHEBI:60240"/>
        <label>6</label>
        <note>in cluster A</note>
    </ligand>
</feature>
<feature type="binding site" evidence="1">
    <location>
        <position position="60"/>
    </location>
    <ligand>
        <name>a divalent metal cation</name>
        <dbReference type="ChEBI" id="CHEBI:60240"/>
        <label>7</label>
        <note>in cluster A</note>
    </ligand>
</feature>
<feature type="modified residue" description="N-acetylmethionine" evidence="2">
    <location>
        <position position="1"/>
    </location>
</feature>
<feature type="splice variant" id="VSP_041603" description="In isoform 2." evidence="3">
    <original>CCSCCPVGCAKCAQGCVCKGASEKCSCCA</original>
    <variation>ECGAISRNLGLWLRLGGNSRLALSASFWGTGLSLPSLPVSFPLQAFCPKFRWGRTAFFSWDTNPNCTPYGFRTELCQTKKSILWVWVLSSSQACY</variation>
    <location>
        <begin position="33"/>
        <end position="61"/>
    </location>
</feature>
<name>MT1E_HUMAN</name>
<comment type="function">
    <text>Metallothioneins have a high content of cysteine residues that bind various heavy metals; these proteins are transcriptionally regulated by both heavy metals and glucocorticoids.</text>
</comment>
<comment type="subunit">
    <text>Monomer.</text>
</comment>
<comment type="interaction">
    <interactant intactId="EBI-12310079">
        <id>P04732</id>
    </interactant>
    <interactant intactId="EBI-10961624">
        <id>Q2TAC2-2</id>
        <label>CCDC57</label>
    </interactant>
    <organismsDiffer>false</organismsDiffer>
    <experiments>3</experiments>
</comment>
<comment type="alternative products">
    <event type="alternative splicing"/>
    <isoform>
        <id>P04732-1</id>
        <name>1</name>
        <sequence type="displayed"/>
    </isoform>
    <isoform>
        <id>P04732-2</id>
        <name>2</name>
        <sequence type="described" ref="VSP_041603"/>
    </isoform>
</comment>
<comment type="domain">
    <text>Class I metallothioneins contain 2 metal-binding domains: four divalent ions are chelated within cluster A of the alpha domain and are coordinated via cysteinyl thiolate bridges to 11 cysteine ligands. Cluster B, the corresponding region within the beta domain, can ligate three divalent ions to 9 cysteines.</text>
</comment>
<comment type="similarity">
    <text evidence="4">Belongs to the metallothionein superfamily. Type 1 family.</text>
</comment>
<dbReference type="EMBL" id="M10942">
    <property type="protein sequence ID" value="AAA59587.1"/>
    <property type="molecule type" value="Genomic_DNA"/>
</dbReference>
<dbReference type="EMBL" id="AF495759">
    <property type="protein sequence ID" value="AAM15968.1"/>
    <property type="molecule type" value="mRNA"/>
</dbReference>
<dbReference type="EMBL" id="AF348996">
    <property type="protein sequence ID" value="AAO32956.2"/>
    <property type="molecule type" value="mRNA"/>
</dbReference>
<dbReference type="EMBL" id="AC026461">
    <property type="status" value="NOT_ANNOTATED_CDS"/>
    <property type="molecule type" value="Genomic_DNA"/>
</dbReference>
<dbReference type="EMBL" id="CH471092">
    <property type="protein sequence ID" value="EAW82872.1"/>
    <property type="molecule type" value="Genomic_DNA"/>
</dbReference>
<dbReference type="EMBL" id="CH471092">
    <property type="protein sequence ID" value="EAW82874.1"/>
    <property type="molecule type" value="Genomic_DNA"/>
</dbReference>
<dbReference type="EMBL" id="BC009699">
    <property type="protein sequence ID" value="AAH09699.1"/>
    <property type="molecule type" value="mRNA"/>
</dbReference>
<dbReference type="EMBL" id="BC062734">
    <property type="protein sequence ID" value="AAH62734.1"/>
    <property type="molecule type" value="mRNA"/>
</dbReference>
<dbReference type="EMBL" id="BC131609">
    <property type="protein sequence ID" value="AAI31610.1"/>
    <property type="molecule type" value="mRNA"/>
</dbReference>
<dbReference type="EMBL" id="S68949">
    <property type="protein sequence ID" value="AAB30082.1"/>
    <property type="molecule type" value="mRNA"/>
</dbReference>
<dbReference type="CCDS" id="CCDS10764.2">
    <molecule id="P04732-1"/>
</dbReference>
<dbReference type="CCDS" id="CCDS86530.1">
    <molecule id="P04732-2"/>
</dbReference>
<dbReference type="PIR" id="A22634">
    <property type="entry name" value="SMHU1E"/>
</dbReference>
<dbReference type="RefSeq" id="NP_001350484.1">
    <molecule id="P04732-2"/>
    <property type="nucleotide sequence ID" value="NM_001363555.2"/>
</dbReference>
<dbReference type="RefSeq" id="NP_783316.2">
    <molecule id="P04732-1"/>
    <property type="nucleotide sequence ID" value="NM_175617.4"/>
</dbReference>
<dbReference type="RefSeq" id="XP_005256013.1">
    <property type="nucleotide sequence ID" value="XM_005255956.4"/>
</dbReference>
<dbReference type="SMR" id="P04732"/>
<dbReference type="BioGRID" id="110599">
    <property type="interactions" value="6"/>
</dbReference>
<dbReference type="FunCoup" id="P04732">
    <property type="interactions" value="442"/>
</dbReference>
<dbReference type="IntAct" id="P04732">
    <property type="interactions" value="3"/>
</dbReference>
<dbReference type="DrugBank" id="DB09130">
    <property type="generic name" value="Copper"/>
</dbReference>
<dbReference type="DrugBank" id="DB12965">
    <property type="generic name" value="Silver"/>
</dbReference>
<dbReference type="GlyGen" id="P04732">
    <property type="glycosylation" value="2 sites, 2 N-linked glycans (1 site)"/>
</dbReference>
<dbReference type="iPTMnet" id="P04732"/>
<dbReference type="PhosphoSitePlus" id="P04732"/>
<dbReference type="BioMuta" id="MT1E"/>
<dbReference type="jPOST" id="P04732"/>
<dbReference type="MassIVE" id="P04732"/>
<dbReference type="PaxDb" id="9606-ENSP00000307706"/>
<dbReference type="PeptideAtlas" id="P04732"/>
<dbReference type="ProteomicsDB" id="51738">
    <molecule id="P04732-1"/>
</dbReference>
<dbReference type="ProteomicsDB" id="51739">
    <molecule id="P04732-2"/>
</dbReference>
<dbReference type="Pumba" id="P04732"/>
<dbReference type="TopDownProteomics" id="P04732-1">
    <molecule id="P04732-1"/>
</dbReference>
<dbReference type="Antibodypedia" id="51264">
    <property type="antibodies" value="69 antibodies from 14 providers"/>
</dbReference>
<dbReference type="DNASU" id="4493"/>
<dbReference type="Ensembl" id="ENST00000306061.10">
    <molecule id="P04732-1"/>
    <property type="protein sequence ID" value="ENSP00000307706.5"/>
    <property type="gene ID" value="ENSG00000169715.15"/>
</dbReference>
<dbReference type="Ensembl" id="ENST00000330439.7">
    <molecule id="P04732-2"/>
    <property type="protein sequence ID" value="ENSP00000328137.6"/>
    <property type="gene ID" value="ENSG00000169715.15"/>
</dbReference>
<dbReference type="GeneID" id="4493"/>
<dbReference type="KEGG" id="hsa:4493"/>
<dbReference type="MANE-Select" id="ENST00000330439.7">
    <molecule id="P04732-2"/>
    <property type="protein sequence ID" value="ENSP00000328137.6"/>
    <property type="RefSeq nucleotide sequence ID" value="NM_001363555.2"/>
    <property type="RefSeq protein sequence ID" value="NP_001350484.1"/>
</dbReference>
<dbReference type="UCSC" id="uc002ejl.5">
    <molecule id="P04732-1"/>
    <property type="organism name" value="human"/>
</dbReference>
<dbReference type="AGR" id="HGNC:7397"/>
<dbReference type="CTD" id="4493"/>
<dbReference type="DisGeNET" id="4493"/>
<dbReference type="GeneCards" id="MT1E"/>
<dbReference type="HGNC" id="HGNC:7397">
    <property type="gene designation" value="MT1E"/>
</dbReference>
<dbReference type="HPA" id="ENSG00000169715">
    <property type="expression patterns" value="Tissue enhanced (liver)"/>
</dbReference>
<dbReference type="MIM" id="156351">
    <property type="type" value="gene"/>
</dbReference>
<dbReference type="neXtProt" id="NX_P04732"/>
<dbReference type="OpenTargets" id="ENSG00000169715"/>
<dbReference type="PharmGKB" id="PA31202"/>
<dbReference type="VEuPathDB" id="HostDB:ENSG00000169715"/>
<dbReference type="eggNOG" id="KOG4738">
    <property type="taxonomic scope" value="Eukaryota"/>
</dbReference>
<dbReference type="GeneTree" id="ENSGT00950000182967"/>
<dbReference type="HOGENOM" id="CLU_171204_2_0_1"/>
<dbReference type="InParanoid" id="P04732"/>
<dbReference type="OMA" id="SEDCSCF"/>
<dbReference type="OrthoDB" id="9540231at2759"/>
<dbReference type="PAN-GO" id="P04732">
    <property type="GO annotations" value="8 GO annotations based on evolutionary models"/>
</dbReference>
<dbReference type="PhylomeDB" id="P04732"/>
<dbReference type="TreeFam" id="TF336054"/>
<dbReference type="PathwayCommons" id="P04732"/>
<dbReference type="Reactome" id="R-HSA-5661231">
    <property type="pathway name" value="Metallothioneins bind metals"/>
</dbReference>
<dbReference type="SignaLink" id="P04732"/>
<dbReference type="BioGRID-ORCS" id="4493">
    <property type="hits" value="263 hits in 1081 CRISPR screens"/>
</dbReference>
<dbReference type="ChiTaRS" id="MT1E">
    <property type="organism name" value="human"/>
</dbReference>
<dbReference type="GeneWiki" id="MT1E"/>
<dbReference type="GenomeRNAi" id="4493"/>
<dbReference type="Pharos" id="P04732">
    <property type="development level" value="Tbio"/>
</dbReference>
<dbReference type="PRO" id="PR:P04732"/>
<dbReference type="Proteomes" id="UP000005640">
    <property type="component" value="Chromosome 16"/>
</dbReference>
<dbReference type="RNAct" id="P04732">
    <property type="molecule type" value="protein"/>
</dbReference>
<dbReference type="Bgee" id="ENSG00000169715">
    <property type="expression patterns" value="Expressed in mucosa of transverse colon and 201 other cell types or tissues"/>
</dbReference>
<dbReference type="ExpressionAtlas" id="P04732">
    <property type="expression patterns" value="baseline and differential"/>
</dbReference>
<dbReference type="GO" id="GO:0005737">
    <property type="term" value="C:cytoplasm"/>
    <property type="evidence" value="ECO:0000314"/>
    <property type="project" value="UniProtKB"/>
</dbReference>
<dbReference type="GO" id="GO:0005634">
    <property type="term" value="C:nucleus"/>
    <property type="evidence" value="ECO:0000314"/>
    <property type="project" value="UniProtKB"/>
</dbReference>
<dbReference type="GO" id="GO:0046872">
    <property type="term" value="F:metal ion binding"/>
    <property type="evidence" value="ECO:0000318"/>
    <property type="project" value="GO_Central"/>
</dbReference>
<dbReference type="GO" id="GO:0008270">
    <property type="term" value="F:zinc ion binding"/>
    <property type="evidence" value="ECO:0000250"/>
    <property type="project" value="UniProtKB"/>
</dbReference>
<dbReference type="GO" id="GO:0071276">
    <property type="term" value="P:cellular response to cadmium ion"/>
    <property type="evidence" value="ECO:0000270"/>
    <property type="project" value="UniProtKB"/>
</dbReference>
<dbReference type="GO" id="GO:0071280">
    <property type="term" value="P:cellular response to copper ion"/>
    <property type="evidence" value="ECO:0000318"/>
    <property type="project" value="GO_Central"/>
</dbReference>
<dbReference type="GO" id="GO:0071294">
    <property type="term" value="P:cellular response to zinc ion"/>
    <property type="evidence" value="ECO:0000270"/>
    <property type="project" value="UniProtKB"/>
</dbReference>
<dbReference type="GO" id="GO:0010273">
    <property type="term" value="P:detoxification of copper ion"/>
    <property type="evidence" value="ECO:0000318"/>
    <property type="project" value="GO_Central"/>
</dbReference>
<dbReference type="GO" id="GO:0006882">
    <property type="term" value="P:intracellular zinc ion homeostasis"/>
    <property type="evidence" value="ECO:0000318"/>
    <property type="project" value="GO_Central"/>
</dbReference>
<dbReference type="GO" id="GO:0045926">
    <property type="term" value="P:negative regulation of growth"/>
    <property type="evidence" value="ECO:0000250"/>
    <property type="project" value="UniProtKB"/>
</dbReference>
<dbReference type="FunFam" id="4.10.10.10:FF:000001">
    <property type="entry name" value="Metallothionein"/>
    <property type="match status" value="1"/>
</dbReference>
<dbReference type="Gene3D" id="4.10.10.10">
    <property type="entry name" value="Metallothionein Isoform II"/>
    <property type="match status" value="1"/>
</dbReference>
<dbReference type="InterPro" id="IPR017854">
    <property type="entry name" value="Metalthion_dom_sf"/>
</dbReference>
<dbReference type="InterPro" id="IPR023587">
    <property type="entry name" value="Metalthion_dom_sf_vert"/>
</dbReference>
<dbReference type="InterPro" id="IPR000006">
    <property type="entry name" value="Metalthion_vert"/>
</dbReference>
<dbReference type="InterPro" id="IPR018064">
    <property type="entry name" value="Metalthion_vert_metal_BS"/>
</dbReference>
<dbReference type="PANTHER" id="PTHR23299">
    <property type="entry name" value="METALLOTHIONEIN"/>
    <property type="match status" value="1"/>
</dbReference>
<dbReference type="PANTHER" id="PTHR23299:SF55">
    <property type="entry name" value="METALLOTHIONEIN-1F"/>
    <property type="match status" value="1"/>
</dbReference>
<dbReference type="Pfam" id="PF00131">
    <property type="entry name" value="Metallothio"/>
    <property type="match status" value="1"/>
</dbReference>
<dbReference type="PRINTS" id="PR00860">
    <property type="entry name" value="MTVERTEBRATE"/>
</dbReference>
<dbReference type="SUPFAM" id="SSF57868">
    <property type="entry name" value="Metallothionein"/>
    <property type="match status" value="1"/>
</dbReference>
<dbReference type="PROSITE" id="PS00203">
    <property type="entry name" value="METALLOTHIONEIN_VRT"/>
    <property type="match status" value="1"/>
</dbReference>
<keyword id="KW-0007">Acetylation</keyword>
<keyword id="KW-0025">Alternative splicing</keyword>
<keyword id="KW-0104">Cadmium</keyword>
<keyword id="KW-0186">Copper</keyword>
<keyword id="KW-0903">Direct protein sequencing</keyword>
<keyword id="KW-0479">Metal-binding</keyword>
<keyword id="KW-0480">Metal-thiolate cluster</keyword>
<keyword id="KW-1267">Proteomics identification</keyword>
<keyword id="KW-1185">Reference proteome</keyword>
<keyword id="KW-0862">Zinc</keyword>
<gene>
    <name type="primary">MT1E</name>
</gene>
<organism>
    <name type="scientific">Homo sapiens</name>
    <name type="common">Human</name>
    <dbReference type="NCBI Taxonomy" id="9606"/>
    <lineage>
        <taxon>Eukaryota</taxon>
        <taxon>Metazoa</taxon>
        <taxon>Chordata</taxon>
        <taxon>Craniata</taxon>
        <taxon>Vertebrata</taxon>
        <taxon>Euteleostomi</taxon>
        <taxon>Mammalia</taxon>
        <taxon>Eutheria</taxon>
        <taxon>Euarchontoglires</taxon>
        <taxon>Primates</taxon>
        <taxon>Haplorrhini</taxon>
        <taxon>Catarrhini</taxon>
        <taxon>Hominidae</taxon>
        <taxon>Homo</taxon>
    </lineage>
</organism>
<accession>P04732</accession>
<accession>A2RRF7</accession>
<accession>Q86YX4</accession>
<accession>Q8TD51</accession>
<evidence type="ECO:0000250" key="1">
    <source>
        <dbReference type="UniProtKB" id="P02795"/>
    </source>
</evidence>
<evidence type="ECO:0000269" key="2">
    <source>
    </source>
</evidence>
<evidence type="ECO:0000303" key="3">
    <source ref="3"/>
</evidence>
<evidence type="ECO:0000305" key="4"/>
<protein>
    <recommendedName>
        <fullName>Metallothionein-1E</fullName>
        <shortName>MT-1E</shortName>
    </recommendedName>
    <alternativeName>
        <fullName>Metallothionein-IE</fullName>
        <shortName>MT-IE</shortName>
    </alternativeName>
</protein>
<proteinExistence type="evidence at protein level"/>